<comment type="function">
    <text evidence="1">Catalyzes the synthesis of 5-aminolevulinate (ALA) from succinyl-CoA and glycine, the first and rate-limiting step in heme biosynthesis.</text>
</comment>
<comment type="catalytic activity">
    <reaction evidence="1">
        <text>succinyl-CoA + glycine + H(+) = 5-aminolevulinate + CO2 + CoA</text>
        <dbReference type="Rhea" id="RHEA:12921"/>
        <dbReference type="ChEBI" id="CHEBI:15378"/>
        <dbReference type="ChEBI" id="CHEBI:16526"/>
        <dbReference type="ChEBI" id="CHEBI:57287"/>
        <dbReference type="ChEBI" id="CHEBI:57292"/>
        <dbReference type="ChEBI" id="CHEBI:57305"/>
        <dbReference type="ChEBI" id="CHEBI:356416"/>
        <dbReference type="EC" id="2.3.1.37"/>
    </reaction>
</comment>
<comment type="cofactor">
    <cofactor evidence="1">
        <name>pyridoxal 5'-phosphate</name>
        <dbReference type="ChEBI" id="CHEBI:597326"/>
    </cofactor>
</comment>
<comment type="pathway">
    <text evidence="1">Porphyrin-containing compound metabolism; protoporphyrin-IX biosynthesis; 5-aminolevulinate from glycine: step 1/1.</text>
</comment>
<comment type="subunit">
    <text evidence="1">Homodimer.</text>
</comment>
<comment type="subcellular location">
    <subcellularLocation>
        <location evidence="5">Mitochondrion matrix</location>
    </subcellularLocation>
</comment>
<comment type="disruption phenotype">
    <text evidence="6">Lethal, unless exogenous ALA is provided, allowing heme biosynthesis from step 2 to proceed. An additional way to maintain cells alive is to add exogenous hemin (heme chloride), thereby fostering cells to use their heme uptake system.</text>
</comment>
<comment type="similarity">
    <text evidence="8">Belongs to the class-II pyridoxal-phosphate-dependent aminotransferase family.</text>
</comment>
<dbReference type="EC" id="2.3.1.37"/>
<dbReference type="EMBL" id="CU329670">
    <property type="protein sequence ID" value="CAB16265.1"/>
    <property type="molecule type" value="Genomic_DNA"/>
</dbReference>
<dbReference type="PIR" id="T38542">
    <property type="entry name" value="T38542"/>
</dbReference>
<dbReference type="RefSeq" id="NP_594388.1">
    <property type="nucleotide sequence ID" value="NM_001019809.2"/>
</dbReference>
<dbReference type="SMR" id="O14092"/>
<dbReference type="BioGRID" id="278510">
    <property type="interactions" value="5"/>
</dbReference>
<dbReference type="FunCoup" id="O14092">
    <property type="interactions" value="392"/>
</dbReference>
<dbReference type="STRING" id="284812.O14092"/>
<dbReference type="iPTMnet" id="O14092"/>
<dbReference type="PaxDb" id="4896-SPAC2F3.09.1"/>
<dbReference type="EnsemblFungi" id="SPAC2F3.09.1">
    <property type="protein sequence ID" value="SPAC2F3.09.1:pep"/>
    <property type="gene ID" value="SPAC2F3.09"/>
</dbReference>
<dbReference type="GeneID" id="2542028"/>
<dbReference type="KEGG" id="spo:2542028"/>
<dbReference type="PomBase" id="SPAC2F3.09">
    <property type="gene designation" value="hem1"/>
</dbReference>
<dbReference type="VEuPathDB" id="FungiDB:SPAC2F3.09"/>
<dbReference type="eggNOG" id="KOG1360">
    <property type="taxonomic scope" value="Eukaryota"/>
</dbReference>
<dbReference type="HOGENOM" id="CLU_015846_6_0_1"/>
<dbReference type="InParanoid" id="O14092"/>
<dbReference type="OMA" id="DQFFRNK"/>
<dbReference type="PhylomeDB" id="O14092"/>
<dbReference type="Reactome" id="R-SPO-189451">
    <property type="pathway name" value="Heme biosynthesis"/>
</dbReference>
<dbReference type="UniPathway" id="UPA00251">
    <property type="reaction ID" value="UER00375"/>
</dbReference>
<dbReference type="PRO" id="PR:O14092"/>
<dbReference type="Proteomes" id="UP000002485">
    <property type="component" value="Chromosome I"/>
</dbReference>
<dbReference type="GO" id="GO:0005759">
    <property type="term" value="C:mitochondrial matrix"/>
    <property type="evidence" value="ECO:0000250"/>
    <property type="project" value="PomBase"/>
</dbReference>
<dbReference type="GO" id="GO:0005739">
    <property type="term" value="C:mitochondrion"/>
    <property type="evidence" value="ECO:0007005"/>
    <property type="project" value="PomBase"/>
</dbReference>
<dbReference type="GO" id="GO:0003870">
    <property type="term" value="F:5-aminolevulinate synthase activity"/>
    <property type="evidence" value="ECO:0000315"/>
    <property type="project" value="PomBase"/>
</dbReference>
<dbReference type="GO" id="GO:0030170">
    <property type="term" value="F:pyridoxal phosphate binding"/>
    <property type="evidence" value="ECO:0007669"/>
    <property type="project" value="InterPro"/>
</dbReference>
<dbReference type="GO" id="GO:0008483">
    <property type="term" value="F:transaminase activity"/>
    <property type="evidence" value="ECO:0000255"/>
    <property type="project" value="PomBase"/>
</dbReference>
<dbReference type="GO" id="GO:0006783">
    <property type="term" value="P:heme biosynthetic process"/>
    <property type="evidence" value="ECO:0000315"/>
    <property type="project" value="PomBase"/>
</dbReference>
<dbReference type="GO" id="GO:0006782">
    <property type="term" value="P:protoporphyrinogen IX biosynthetic process"/>
    <property type="evidence" value="ECO:0007669"/>
    <property type="project" value="UniProtKB-UniPathway"/>
</dbReference>
<dbReference type="CDD" id="cd06454">
    <property type="entry name" value="KBL_like"/>
    <property type="match status" value="1"/>
</dbReference>
<dbReference type="FunFam" id="3.40.640.10:FF:000006">
    <property type="entry name" value="5-aminolevulinate synthase, mitochondrial"/>
    <property type="match status" value="1"/>
</dbReference>
<dbReference type="Gene3D" id="3.90.1150.10">
    <property type="entry name" value="Aspartate Aminotransferase, domain 1"/>
    <property type="match status" value="1"/>
</dbReference>
<dbReference type="Gene3D" id="3.40.640.10">
    <property type="entry name" value="Type I PLP-dependent aspartate aminotransferase-like (Major domain)"/>
    <property type="match status" value="1"/>
</dbReference>
<dbReference type="InterPro" id="IPR010961">
    <property type="entry name" value="4pyrrol_synth_NH2levulA_synth"/>
</dbReference>
<dbReference type="InterPro" id="IPR001917">
    <property type="entry name" value="Aminotrans_II_pyridoxalP_BS"/>
</dbReference>
<dbReference type="InterPro" id="IPR004839">
    <property type="entry name" value="Aminotransferase_I/II_large"/>
</dbReference>
<dbReference type="InterPro" id="IPR050087">
    <property type="entry name" value="AON_synthase_class-II"/>
</dbReference>
<dbReference type="InterPro" id="IPR015424">
    <property type="entry name" value="PyrdxlP-dep_Trfase"/>
</dbReference>
<dbReference type="InterPro" id="IPR015421">
    <property type="entry name" value="PyrdxlP-dep_Trfase_major"/>
</dbReference>
<dbReference type="InterPro" id="IPR015422">
    <property type="entry name" value="PyrdxlP-dep_Trfase_small"/>
</dbReference>
<dbReference type="NCBIfam" id="TIGR01821">
    <property type="entry name" value="5aminolev_synth"/>
    <property type="match status" value="1"/>
</dbReference>
<dbReference type="PANTHER" id="PTHR13693:SF102">
    <property type="entry name" value="2-AMINO-3-KETOBUTYRATE COENZYME A LIGASE, MITOCHONDRIAL"/>
    <property type="match status" value="1"/>
</dbReference>
<dbReference type="PANTHER" id="PTHR13693">
    <property type="entry name" value="CLASS II AMINOTRANSFERASE/8-AMINO-7-OXONONANOATE SYNTHASE"/>
    <property type="match status" value="1"/>
</dbReference>
<dbReference type="Pfam" id="PF00155">
    <property type="entry name" value="Aminotran_1_2"/>
    <property type="match status" value="1"/>
</dbReference>
<dbReference type="SUPFAM" id="SSF53383">
    <property type="entry name" value="PLP-dependent transferases"/>
    <property type="match status" value="1"/>
</dbReference>
<dbReference type="PROSITE" id="PS00599">
    <property type="entry name" value="AA_TRANSFER_CLASS_2"/>
    <property type="match status" value="1"/>
</dbReference>
<accession>O14092</accession>
<keyword id="KW-0012">Acyltransferase</keyword>
<keyword id="KW-0350">Heme biosynthesis</keyword>
<keyword id="KW-0496">Mitochondrion</keyword>
<keyword id="KW-0663">Pyridoxal phosphate</keyword>
<keyword id="KW-1185">Reference proteome</keyword>
<keyword id="KW-0808">Transferase</keyword>
<keyword id="KW-0809">Transit peptide</keyword>
<name>HEM1_SCHPO</name>
<reference key="1">
    <citation type="journal article" date="2002" name="Nature">
        <title>The genome sequence of Schizosaccharomyces pombe.</title>
        <authorList>
            <person name="Wood V."/>
            <person name="Gwilliam R."/>
            <person name="Rajandream M.A."/>
            <person name="Lyne M.H."/>
            <person name="Lyne R."/>
            <person name="Stewart A."/>
            <person name="Sgouros J.G."/>
            <person name="Peat N."/>
            <person name="Hayles J."/>
            <person name="Baker S.G."/>
            <person name="Basham D."/>
            <person name="Bowman S."/>
            <person name="Brooks K."/>
            <person name="Brown D."/>
            <person name="Brown S."/>
            <person name="Chillingworth T."/>
            <person name="Churcher C.M."/>
            <person name="Collins M."/>
            <person name="Connor R."/>
            <person name="Cronin A."/>
            <person name="Davis P."/>
            <person name="Feltwell T."/>
            <person name="Fraser A."/>
            <person name="Gentles S."/>
            <person name="Goble A."/>
            <person name="Hamlin N."/>
            <person name="Harris D.E."/>
            <person name="Hidalgo J."/>
            <person name="Hodgson G."/>
            <person name="Holroyd S."/>
            <person name="Hornsby T."/>
            <person name="Howarth S."/>
            <person name="Huckle E.J."/>
            <person name="Hunt S."/>
            <person name="Jagels K."/>
            <person name="James K.D."/>
            <person name="Jones L."/>
            <person name="Jones M."/>
            <person name="Leather S."/>
            <person name="McDonald S."/>
            <person name="McLean J."/>
            <person name="Mooney P."/>
            <person name="Moule S."/>
            <person name="Mungall K.L."/>
            <person name="Murphy L.D."/>
            <person name="Niblett D."/>
            <person name="Odell C."/>
            <person name="Oliver K."/>
            <person name="O'Neil S."/>
            <person name="Pearson D."/>
            <person name="Quail M.A."/>
            <person name="Rabbinowitsch E."/>
            <person name="Rutherford K.M."/>
            <person name="Rutter S."/>
            <person name="Saunders D."/>
            <person name="Seeger K."/>
            <person name="Sharp S."/>
            <person name="Skelton J."/>
            <person name="Simmonds M.N."/>
            <person name="Squares R."/>
            <person name="Squares S."/>
            <person name="Stevens K."/>
            <person name="Taylor K."/>
            <person name="Taylor R.G."/>
            <person name="Tivey A."/>
            <person name="Walsh S.V."/>
            <person name="Warren T."/>
            <person name="Whitehead S."/>
            <person name="Woodward J.R."/>
            <person name="Volckaert G."/>
            <person name="Aert R."/>
            <person name="Robben J."/>
            <person name="Grymonprez B."/>
            <person name="Weltjens I."/>
            <person name="Vanstreels E."/>
            <person name="Rieger M."/>
            <person name="Schaefer M."/>
            <person name="Mueller-Auer S."/>
            <person name="Gabel C."/>
            <person name="Fuchs M."/>
            <person name="Duesterhoeft A."/>
            <person name="Fritzc C."/>
            <person name="Holzer E."/>
            <person name="Moestl D."/>
            <person name="Hilbert H."/>
            <person name="Borzym K."/>
            <person name="Langer I."/>
            <person name="Beck A."/>
            <person name="Lehrach H."/>
            <person name="Reinhardt R."/>
            <person name="Pohl T.M."/>
            <person name="Eger P."/>
            <person name="Zimmermann W."/>
            <person name="Wedler H."/>
            <person name="Wambutt R."/>
            <person name="Purnelle B."/>
            <person name="Goffeau A."/>
            <person name="Cadieu E."/>
            <person name="Dreano S."/>
            <person name="Gloux S."/>
            <person name="Lelaure V."/>
            <person name="Mottier S."/>
            <person name="Galibert F."/>
            <person name="Aves S.J."/>
            <person name="Xiang Z."/>
            <person name="Hunt C."/>
            <person name="Moore K."/>
            <person name="Hurst S.M."/>
            <person name="Lucas M."/>
            <person name="Rochet M."/>
            <person name="Gaillardin C."/>
            <person name="Tallada V.A."/>
            <person name="Garzon A."/>
            <person name="Thode G."/>
            <person name="Daga R.R."/>
            <person name="Cruzado L."/>
            <person name="Jimenez J."/>
            <person name="Sanchez M."/>
            <person name="del Rey F."/>
            <person name="Benito J."/>
            <person name="Dominguez A."/>
            <person name="Revuelta J.L."/>
            <person name="Moreno S."/>
            <person name="Armstrong J."/>
            <person name="Forsburg S.L."/>
            <person name="Cerutti L."/>
            <person name="Lowe T."/>
            <person name="McCombie W.R."/>
            <person name="Paulsen I."/>
            <person name="Potashkin J."/>
            <person name="Shpakovski G.V."/>
            <person name="Ussery D."/>
            <person name="Barrell B.G."/>
            <person name="Nurse P."/>
        </authorList>
    </citation>
    <scope>NUCLEOTIDE SEQUENCE [LARGE SCALE GENOMIC DNA]</scope>
    <source>
        <strain>972 / ATCC 24843</strain>
    </source>
</reference>
<reference key="2">
    <citation type="journal article" date="2006" name="Nat. Biotechnol.">
        <title>ORFeome cloning and global analysis of protein localization in the fission yeast Schizosaccharomyces pombe.</title>
        <authorList>
            <person name="Matsuyama A."/>
            <person name="Arai R."/>
            <person name="Yashiroda Y."/>
            <person name="Shirai A."/>
            <person name="Kamata A."/>
            <person name="Sekido S."/>
            <person name="Kobayashi Y."/>
            <person name="Hashimoto A."/>
            <person name="Hamamoto M."/>
            <person name="Hiraoka Y."/>
            <person name="Horinouchi S."/>
            <person name="Yoshida M."/>
        </authorList>
    </citation>
    <scope>SUBCELLULAR LOCATION [LARGE SCALE ANALYSIS]</scope>
</reference>
<reference key="3">
    <citation type="journal article" date="2015" name="J. Biol. Chem.">
        <title>Shu1 is a cell-surface protein involved in iron acquisition from heme in Schizosaccharomyces pombe.</title>
        <authorList>
            <person name="Mourer T."/>
            <person name="Jacques J.F."/>
            <person name="Brault A."/>
            <person name="Bisaillon M."/>
            <person name="Labbe S."/>
        </authorList>
    </citation>
    <scope>DISRUPTION PHENOTYPE</scope>
</reference>
<feature type="transit peptide" description="Mitochondrion" evidence="3">
    <location>
        <begin position="1"/>
        <end position="25"/>
    </location>
</feature>
<feature type="chain" id="PRO_0000001243" description="5-aminolevulinate synthase, mitochondrial">
    <location>
        <begin position="26"/>
        <end position="558"/>
    </location>
</feature>
<feature type="region of interest" description="Disordered" evidence="4">
    <location>
        <begin position="103"/>
        <end position="124"/>
    </location>
</feature>
<feature type="active site" evidence="2">
    <location>
        <position position="377"/>
    </location>
</feature>
<feature type="binding site" evidence="2">
    <location>
        <position position="152"/>
    </location>
    <ligand>
        <name>substrate</name>
    </ligand>
</feature>
<feature type="binding site" evidence="2">
    <location>
        <position position="265"/>
    </location>
    <ligand>
        <name>substrate</name>
    </ligand>
</feature>
<feature type="binding site" evidence="2">
    <location>
        <position position="284"/>
    </location>
    <ligand>
        <name>substrate</name>
    </ligand>
</feature>
<feature type="binding site" description="in other chain" evidence="2">
    <location>
        <position position="317"/>
    </location>
    <ligand>
        <name>pyridoxal 5'-phosphate</name>
        <dbReference type="ChEBI" id="CHEBI:597326"/>
        <note>ligand shared between dimeric partners</note>
    </ligand>
</feature>
<feature type="binding site" description="in other chain" evidence="2">
    <location>
        <position position="345"/>
    </location>
    <ligand>
        <name>pyridoxal 5'-phosphate</name>
        <dbReference type="ChEBI" id="CHEBI:597326"/>
        <note>ligand shared between dimeric partners</note>
    </ligand>
</feature>
<feature type="binding site" description="in other chain" evidence="2">
    <location>
        <position position="374"/>
    </location>
    <ligand>
        <name>pyridoxal 5'-phosphate</name>
        <dbReference type="ChEBI" id="CHEBI:597326"/>
        <note>ligand shared between dimeric partners</note>
    </ligand>
</feature>
<feature type="binding site" evidence="2">
    <location>
        <position position="406"/>
    </location>
    <ligand>
        <name>pyridoxal 5'-phosphate</name>
        <dbReference type="ChEBI" id="CHEBI:597326"/>
        <note>ligand shared between dimeric partners</note>
    </ligand>
</feature>
<feature type="binding site" evidence="2">
    <location>
        <position position="407"/>
    </location>
    <ligand>
        <name>pyridoxal 5'-phosphate</name>
        <dbReference type="ChEBI" id="CHEBI:597326"/>
        <note>ligand shared between dimeric partners</note>
    </ligand>
</feature>
<feature type="binding site" evidence="2">
    <location>
        <position position="492"/>
    </location>
    <ligand>
        <name>substrate</name>
    </ligand>
</feature>
<feature type="modified residue" description="N6-(pyridoxal phosphate)lysine" evidence="2">
    <location>
        <position position="377"/>
    </location>
</feature>
<organism>
    <name type="scientific">Schizosaccharomyces pombe (strain 972 / ATCC 24843)</name>
    <name type="common">Fission yeast</name>
    <dbReference type="NCBI Taxonomy" id="284812"/>
    <lineage>
        <taxon>Eukaryota</taxon>
        <taxon>Fungi</taxon>
        <taxon>Dikarya</taxon>
        <taxon>Ascomycota</taxon>
        <taxon>Taphrinomycotina</taxon>
        <taxon>Schizosaccharomycetes</taxon>
        <taxon>Schizosaccharomycetales</taxon>
        <taxon>Schizosaccharomycetaceae</taxon>
        <taxon>Schizosaccharomyces</taxon>
    </lineage>
</organism>
<proteinExistence type="inferred from homology"/>
<gene>
    <name evidence="7" type="primary">hem1</name>
    <name type="ORF">SPAC2F3.09</name>
</gene>
<protein>
    <recommendedName>
        <fullName evidence="9">5-aminolevulinate synthase, mitochondrial</fullName>
        <ecNumber>2.3.1.37</ecNumber>
    </recommendedName>
    <alternativeName>
        <fullName>5-aminolevulinic acid synthase</fullName>
    </alternativeName>
    <alternativeName>
        <fullName>Delta-ALA synthase</fullName>
    </alternativeName>
    <alternativeName>
        <fullName>Delta-aminolevulinate synthase</fullName>
    </alternativeName>
</protein>
<evidence type="ECO:0000250" key="1">
    <source>
        <dbReference type="UniProtKB" id="P09950"/>
    </source>
</evidence>
<evidence type="ECO:0000250" key="2">
    <source>
        <dbReference type="UniProtKB" id="P18079"/>
    </source>
</evidence>
<evidence type="ECO:0000255" key="3"/>
<evidence type="ECO:0000256" key="4">
    <source>
        <dbReference type="SAM" id="MobiDB-lite"/>
    </source>
</evidence>
<evidence type="ECO:0000269" key="5">
    <source>
    </source>
</evidence>
<evidence type="ECO:0000269" key="6">
    <source>
    </source>
</evidence>
<evidence type="ECO:0000303" key="7">
    <source>
    </source>
</evidence>
<evidence type="ECO:0000305" key="8"/>
<evidence type="ECO:0000305" key="9">
    <source>
    </source>
</evidence>
<sequence length="558" mass="60960">MERVVKLAAKHCPFVSKADPSALRRMAGAGLIRAGARCPVVRHALPVAAATGADVSRGFKSDSKQMAMEPSLDEIHLKAGVVNTGSRTCRHADAVKAAAEAATTTPVTKKHQMPKHYASDLNGVGPATTPRFDYDTFYREELDKKHRDKSYRYFNNINRLAKEYPLAHLADPNTRVEVWCSNDYLNMGGHKKIREAMHQCIETYGGGAGGTRNIAGHNQHAVRLEKSLADLHQKPAALVFGSCYVANDATLSTLGRKLPNCIFLSDEMNHASMINGIRNSRCEKIIFKHNDLVDLEAKLASLPLNRPKIIAFESVYSMSGNVAPISEICDLAKKYGAITFLDEVHAVGMYGPRGAGVAEETPGLLSRVDIITGTLAKSYGCVGGYIAASSTLVDMIRSLAPGFIFTTSLPPHVMVGALTAVEHLKVSNVEREQQRSAVRRVKQSLSEIGIPVLSNDTHIVPAMVGDAHLAKLASDSLLHDHNIYVQSINFPTVSVGTERLRITPTPAHNTEHYVQSLTNAMNDVWSKFNINRIDGWEKRGIDVGRLCKFPVLPFTTTH</sequence>